<protein>
    <recommendedName>
        <fullName>Low calcium response locus protein D</fullName>
    </recommendedName>
</protein>
<evidence type="ECO:0000255" key="1"/>
<evidence type="ECO:0000305" key="2"/>
<reference key="1">
    <citation type="journal article" date="1991" name="J. Bacteriol.">
        <title>LcrD, a membrane-bound regulator of the Yersinia pestis low-calcium response.</title>
        <authorList>
            <person name="Plano G.V."/>
            <person name="Barve S.S."/>
            <person name="Straley S.C."/>
        </authorList>
    </citation>
    <scope>NUCLEOTIDE SEQUENCE [GENOMIC DNA]</scope>
</reference>
<reference key="2">
    <citation type="journal article" date="1998" name="Infect. Immun.">
        <title>DNA sequencing and analysis of the low-Ca2+-response plasmid pCD1 of Yersinia pestis KIM5.</title>
        <authorList>
            <person name="Perry R.D."/>
            <person name="Straley S.C."/>
            <person name="Fetherston J.D."/>
            <person name="Rose D.J."/>
            <person name="Gregor J."/>
            <person name="Blattner F.R."/>
        </authorList>
    </citation>
    <scope>NUCLEOTIDE SEQUENCE [GENOMIC DNA]</scope>
    <source>
        <strain>KIM5 / Biovar Mediaevalis</strain>
    </source>
</reference>
<reference key="3">
    <citation type="journal article" date="1998" name="J. Bacteriol.">
        <title>Structural organization of virulence-associated plasmids of Yersinia pestis.</title>
        <authorList>
            <person name="Hu P."/>
            <person name="Elliott J."/>
            <person name="McCready P."/>
            <person name="Skowronski E."/>
            <person name="Garnes J."/>
            <person name="Kobayashi A."/>
            <person name="Brubaker R.R."/>
            <person name="Garcia E."/>
        </authorList>
    </citation>
    <scope>NUCLEOTIDE SEQUENCE [GENOMIC DNA]</scope>
    <source>
        <strain>KIM5 / Biovar Mediaevalis</strain>
    </source>
</reference>
<reference key="4">
    <citation type="journal article" date="2001" name="Nature">
        <title>Genome sequence of Yersinia pestis, the causative agent of plague.</title>
        <authorList>
            <person name="Parkhill J."/>
            <person name="Wren B.W."/>
            <person name="Thomson N.R."/>
            <person name="Titball R.W."/>
            <person name="Holden M.T.G."/>
            <person name="Prentice M.B."/>
            <person name="Sebaihia M."/>
            <person name="James K.D."/>
            <person name="Churcher C.M."/>
            <person name="Mungall K.L."/>
            <person name="Baker S."/>
            <person name="Basham D."/>
            <person name="Bentley S.D."/>
            <person name="Brooks K."/>
            <person name="Cerdeno-Tarraga A.-M."/>
            <person name="Chillingworth T."/>
            <person name="Cronin A."/>
            <person name="Davies R.M."/>
            <person name="Davis P."/>
            <person name="Dougan G."/>
            <person name="Feltwell T."/>
            <person name="Hamlin N."/>
            <person name="Holroyd S."/>
            <person name="Jagels K."/>
            <person name="Karlyshev A.V."/>
            <person name="Leather S."/>
            <person name="Moule S."/>
            <person name="Oyston P.C.F."/>
            <person name="Quail M.A."/>
            <person name="Rutherford K.M."/>
            <person name="Simmonds M."/>
            <person name="Skelton J."/>
            <person name="Stevens K."/>
            <person name="Whitehead S."/>
            <person name="Barrell B.G."/>
        </authorList>
    </citation>
    <scope>NUCLEOTIDE SEQUENCE [LARGE SCALE GENOMIC DNA]</scope>
    <source>
        <strain>CO-92 / Biovar Orientalis</strain>
    </source>
</reference>
<reference key="5">
    <citation type="journal article" date="2004" name="DNA Res.">
        <title>Complete genome sequence of Yersinia pestis strain 91001, an isolate avirulent to humans.</title>
        <authorList>
            <person name="Song Y."/>
            <person name="Tong Z."/>
            <person name="Wang J."/>
            <person name="Wang L."/>
            <person name="Guo Z."/>
            <person name="Han Y."/>
            <person name="Zhang J."/>
            <person name="Pei D."/>
            <person name="Zhou D."/>
            <person name="Qin H."/>
            <person name="Pang X."/>
            <person name="Han Y."/>
            <person name="Zhai J."/>
            <person name="Li M."/>
            <person name="Cui B."/>
            <person name="Qi Z."/>
            <person name="Jin L."/>
            <person name="Dai R."/>
            <person name="Chen F."/>
            <person name="Li S."/>
            <person name="Ye C."/>
            <person name="Du Z."/>
            <person name="Lin W."/>
            <person name="Wang J."/>
            <person name="Yu J."/>
            <person name="Yang H."/>
            <person name="Wang J."/>
            <person name="Huang P."/>
            <person name="Yang R."/>
        </authorList>
    </citation>
    <scope>NUCLEOTIDE SEQUENCE [LARGE SCALE GENOMIC DNA]</scope>
    <source>
        <strain>91001 / Biovar Mediaevalis</strain>
    </source>
</reference>
<feature type="chain" id="PRO_0000190030" description="Low calcium response locus protein D">
    <location>
        <begin position="1"/>
        <end position="704"/>
    </location>
</feature>
<feature type="transmembrane region" description="Helical" evidence="1">
    <location>
        <begin position="18"/>
        <end position="35"/>
    </location>
</feature>
<feature type="transmembrane region" description="Helical" evidence="1">
    <location>
        <begin position="42"/>
        <end position="61"/>
    </location>
</feature>
<feature type="transmembrane region" description="Helical" evidence="1">
    <location>
        <begin position="108"/>
        <end position="132"/>
    </location>
</feature>
<feature type="transmembrane region" description="Helical" evidence="1">
    <location>
        <begin position="200"/>
        <end position="220"/>
    </location>
</feature>
<feature type="transmembrane region" description="Helical" evidence="1">
    <location>
        <begin position="235"/>
        <end position="259"/>
    </location>
</feature>
<feature type="transmembrane region" description="Helical" evidence="1">
    <location>
        <begin position="278"/>
        <end position="297"/>
    </location>
</feature>
<feature type="transmembrane region" description="Helical" evidence="1">
    <location>
        <begin position="304"/>
        <end position="320"/>
    </location>
</feature>
<feature type="sequence conflict" description="In Ref. 1; AAA27643." evidence="2" ref="1">
    <original>I</original>
    <variation>N</variation>
    <location>
        <position position="388"/>
    </location>
</feature>
<gene>
    <name type="primary">lcrD</name>
    <name type="ordered locus">YPCD1.34c</name>
    <name type="ordered locus">y5044</name>
    <name type="ordered locus">y0047</name>
    <name type="ordered locus">YP_pCD49</name>
</gene>
<geneLocation type="plasmid">
    <name>pCD1</name>
</geneLocation>
<sequence length="704" mass="77802">MNPHDLEWLNRIGERKDIMLAVLLLAVVFMMVLPLPPLVLDILIAVNMTISVVLLMIAIYINSPLQFSAFPAVLLVTTLFRLALSVSTTRMILLQADAGQIVYTFGNFVVGGNLIVGIVIFLIITIVQFLVITKGSERVAEVSARFSLDAMPGKQMSIDGDMRAGVIDVNEARERRATIEKESQMFGSMDGAMKFVKGDAIAGLIIIFVNILGGVTIGVTQKGLAAAEALQLYSILTVGDGMVSQVPALLIAITAGIIVTRVSSEDSSDLGSDIGKQVVAQPKAMLIGGVLLLLFGLIPGFPTVTFLILALLVGCGGYMLSRKQSRNDEANQDLQSILTSGSGAPAARTKAKTSGANKGRLGEQEAFAMTVPLLIDVDSSQQEALEAIALNDELVRVRRALYLDLGVPFPGIHLRFNEGMGEGEYIISLQEVPVARGELKAGYLLVRESVSQLELLGIPYEKGEHLLPDQEAFWVSVEYEERLEKSQLEFFSHSQVLTWHLSHVLREYAEDFIGIQETRYLLEQMEGGYGELIKEVQRIVPLQRMTEILQRLVGEDISIRNMRSILEAMVEWGQKEKDVVQLTEYIRSSLKRYICYKYANGNNILPAYLFDQEVEEKIRSGVRQTSAGSYLALEPAVTESLLEQVRKTIGDLSQIQSKPVLIVSMDIRRYVRKLIESEYYGLPVLSYQELTQQINIQPLGRICL</sequence>
<dbReference type="EMBL" id="M77014">
    <property type="protein sequence ID" value="AAA27643.1"/>
    <property type="molecule type" value="Genomic_DNA"/>
</dbReference>
<dbReference type="EMBL" id="AF074612">
    <property type="protein sequence ID" value="AAC69797.1"/>
    <property type="molecule type" value="Genomic_DNA"/>
</dbReference>
<dbReference type="EMBL" id="AF053946">
    <property type="protein sequence ID" value="AAC62571.1"/>
    <property type="molecule type" value="Genomic_DNA"/>
</dbReference>
<dbReference type="EMBL" id="AL117189">
    <property type="protein sequence ID" value="CAB54911.1"/>
    <property type="molecule type" value="Genomic_DNA"/>
</dbReference>
<dbReference type="EMBL" id="AE017043">
    <property type="protein sequence ID" value="AAS58568.1"/>
    <property type="molecule type" value="Genomic_DNA"/>
</dbReference>
<dbReference type="PIR" id="A41321">
    <property type="entry name" value="A41321"/>
</dbReference>
<dbReference type="RefSeq" id="NP_395168.1">
    <property type="nucleotide sequence ID" value="NC_003131.1"/>
</dbReference>
<dbReference type="RefSeq" id="NP_857748.1">
    <property type="nucleotide sequence ID" value="NC_004836.1"/>
</dbReference>
<dbReference type="RefSeq" id="NP_857943.1">
    <property type="nucleotide sequence ID" value="NC_004839.1"/>
</dbReference>
<dbReference type="RefSeq" id="WP_002212971.1">
    <property type="nucleotide sequence ID" value="NZ_WUCM01000070.1"/>
</dbReference>
<dbReference type="SMR" id="P69955"/>
<dbReference type="IntAct" id="P69955">
    <property type="interactions" value="4"/>
</dbReference>
<dbReference type="MINT" id="P69955"/>
<dbReference type="PaxDb" id="214092-5832454"/>
<dbReference type="EnsemblBacteria" id="AAS58568">
    <property type="protein sequence ID" value="AAS58568"/>
    <property type="gene ID" value="YP_pCD49"/>
</dbReference>
<dbReference type="KEGG" id="ype:YPCD1.34c"/>
<dbReference type="KEGG" id="ypm:YP_pCD49"/>
<dbReference type="PATRIC" id="fig|214092.21.peg.45"/>
<dbReference type="eggNOG" id="COG4789">
    <property type="taxonomic scope" value="Bacteria"/>
</dbReference>
<dbReference type="HOGENOM" id="CLU_015346_3_0_6"/>
<dbReference type="OMA" id="QHERDIN"/>
<dbReference type="OrthoDB" id="9759185at2"/>
<dbReference type="Proteomes" id="UP000000815">
    <property type="component" value="Plasmid pCD1"/>
</dbReference>
<dbReference type="Proteomes" id="UP000001019">
    <property type="component" value="Plasmid pCD1"/>
</dbReference>
<dbReference type="GO" id="GO:0005886">
    <property type="term" value="C:plasma membrane"/>
    <property type="evidence" value="ECO:0000318"/>
    <property type="project" value="GO_Central"/>
</dbReference>
<dbReference type="GO" id="GO:0009306">
    <property type="term" value="P:protein secretion"/>
    <property type="evidence" value="ECO:0007669"/>
    <property type="project" value="InterPro"/>
</dbReference>
<dbReference type="Gene3D" id="3.40.30.60">
    <property type="entry name" value="FHIPEP family, domain 1"/>
    <property type="match status" value="1"/>
</dbReference>
<dbReference type="Gene3D" id="1.10.8.540">
    <property type="entry name" value="FHIPEP family, domain 3"/>
    <property type="match status" value="1"/>
</dbReference>
<dbReference type="Gene3D" id="3.40.50.12790">
    <property type="entry name" value="FHIPEP family, domain 4"/>
    <property type="match status" value="1"/>
</dbReference>
<dbReference type="InterPro" id="IPR042194">
    <property type="entry name" value="FHIPEP_1"/>
</dbReference>
<dbReference type="InterPro" id="IPR042193">
    <property type="entry name" value="FHIPEP_3"/>
</dbReference>
<dbReference type="InterPro" id="IPR042196">
    <property type="entry name" value="FHIPEP_4"/>
</dbReference>
<dbReference type="InterPro" id="IPR025505">
    <property type="entry name" value="FHIPEP_CS"/>
</dbReference>
<dbReference type="InterPro" id="IPR001712">
    <property type="entry name" value="T3SS_FHIPEP"/>
</dbReference>
<dbReference type="InterPro" id="IPR006302">
    <property type="entry name" value="T3SS_HrcV"/>
</dbReference>
<dbReference type="NCBIfam" id="TIGR01399">
    <property type="entry name" value="hrcV"/>
    <property type="match status" value="1"/>
</dbReference>
<dbReference type="PANTHER" id="PTHR30161">
    <property type="entry name" value="FLAGELLAR EXPORT PROTEIN, MEMBRANE FLHA SUBUNIT-RELATED"/>
    <property type="match status" value="1"/>
</dbReference>
<dbReference type="PANTHER" id="PTHR30161:SF2">
    <property type="entry name" value="INVASION PROTEIN INVA"/>
    <property type="match status" value="1"/>
</dbReference>
<dbReference type="Pfam" id="PF00771">
    <property type="entry name" value="FHIPEP"/>
    <property type="match status" value="1"/>
</dbReference>
<dbReference type="PIRSF" id="PIRSF005419">
    <property type="entry name" value="FlhA"/>
    <property type="match status" value="1"/>
</dbReference>
<dbReference type="PRINTS" id="PR00949">
    <property type="entry name" value="TYPE3IMAPROT"/>
</dbReference>
<dbReference type="PROSITE" id="PS00994">
    <property type="entry name" value="FHIPEP"/>
    <property type="match status" value="1"/>
</dbReference>
<accession>P69955</accession>
<accession>P31487</accession>
<accession>Q56976</accession>
<accession>Q663K6</accession>
<organism>
    <name type="scientific">Yersinia pestis</name>
    <dbReference type="NCBI Taxonomy" id="632"/>
    <lineage>
        <taxon>Bacteria</taxon>
        <taxon>Pseudomonadati</taxon>
        <taxon>Pseudomonadota</taxon>
        <taxon>Gammaproteobacteria</taxon>
        <taxon>Enterobacterales</taxon>
        <taxon>Yersiniaceae</taxon>
        <taxon>Yersinia</taxon>
    </lineage>
</organism>
<name>LCRD_YERPE</name>
<comment type="function">
    <text>Could be involved in the secretion of the yop virulence proteins.</text>
</comment>
<comment type="subcellular location">
    <subcellularLocation>
        <location>Cell inner membrane</location>
        <topology>Multi-pass membrane protein</topology>
    </subcellularLocation>
</comment>
<comment type="similarity">
    <text evidence="2">Belongs to the FHIPEP (flagella/HR/invasion proteins export pore) family.</text>
</comment>
<proteinExistence type="inferred from homology"/>
<keyword id="KW-0997">Cell inner membrane</keyword>
<keyword id="KW-1003">Cell membrane</keyword>
<keyword id="KW-0472">Membrane</keyword>
<keyword id="KW-0614">Plasmid</keyword>
<keyword id="KW-0653">Protein transport</keyword>
<keyword id="KW-1185">Reference proteome</keyword>
<keyword id="KW-0812">Transmembrane</keyword>
<keyword id="KW-1133">Transmembrane helix</keyword>
<keyword id="KW-0813">Transport</keyword>
<keyword id="KW-0843">Virulence</keyword>